<gene>
    <name evidence="1" type="primary">xerC</name>
    <name type="ordered locus">SSP1516</name>
</gene>
<accession>Q49X37</accession>
<organism>
    <name type="scientific">Staphylococcus saprophyticus subsp. saprophyticus (strain ATCC 15305 / DSM 20229 / NCIMB 8711 / NCTC 7292 / S-41)</name>
    <dbReference type="NCBI Taxonomy" id="342451"/>
    <lineage>
        <taxon>Bacteria</taxon>
        <taxon>Bacillati</taxon>
        <taxon>Bacillota</taxon>
        <taxon>Bacilli</taxon>
        <taxon>Bacillales</taxon>
        <taxon>Staphylococcaceae</taxon>
        <taxon>Staphylococcus</taxon>
    </lineage>
</organism>
<keyword id="KW-0131">Cell cycle</keyword>
<keyword id="KW-0132">Cell division</keyword>
<keyword id="KW-0159">Chromosome partition</keyword>
<keyword id="KW-0963">Cytoplasm</keyword>
<keyword id="KW-0229">DNA integration</keyword>
<keyword id="KW-0233">DNA recombination</keyword>
<keyword id="KW-0238">DNA-binding</keyword>
<keyword id="KW-1185">Reference proteome</keyword>
<comment type="function">
    <text evidence="1">Site-specific tyrosine recombinase, which acts by catalyzing the cutting and rejoining of the recombining DNA molecules. The XerC-XerD complex is essential to convert dimers of the bacterial chromosome into monomers to permit their segregation at cell division. It also contributes to the segregational stability of plasmids.</text>
</comment>
<comment type="subunit">
    <text evidence="1">Forms a cyclic heterotetrameric complex composed of two molecules of XerC and two molecules of XerD.</text>
</comment>
<comment type="subcellular location">
    <subcellularLocation>
        <location evidence="1">Cytoplasm</location>
    </subcellularLocation>
</comment>
<comment type="similarity">
    <text evidence="1">Belongs to the 'phage' integrase family. XerC subfamily.</text>
</comment>
<proteinExistence type="inferred from homology"/>
<reference key="1">
    <citation type="journal article" date="2005" name="Proc. Natl. Acad. Sci. U.S.A.">
        <title>Whole genome sequence of Staphylococcus saprophyticus reveals the pathogenesis of uncomplicated urinary tract infection.</title>
        <authorList>
            <person name="Kuroda M."/>
            <person name="Yamashita A."/>
            <person name="Hirakawa H."/>
            <person name="Kumano M."/>
            <person name="Morikawa K."/>
            <person name="Higashide M."/>
            <person name="Maruyama A."/>
            <person name="Inose Y."/>
            <person name="Matoba K."/>
            <person name="Toh H."/>
            <person name="Kuhara S."/>
            <person name="Hattori M."/>
            <person name="Ohta T."/>
        </authorList>
    </citation>
    <scope>NUCLEOTIDE SEQUENCE [LARGE SCALE GENOMIC DNA]</scope>
    <source>
        <strain>ATCC 15305 / DSM 20229 / NCIMB 8711 / NCTC 7292 / S-41</strain>
    </source>
</reference>
<feature type="chain" id="PRO_0000095339" description="Tyrosine recombinase XerC">
    <location>
        <begin position="1"/>
        <end position="296"/>
    </location>
</feature>
<feature type="domain" description="Core-binding (CB)" evidence="3">
    <location>
        <begin position="1"/>
        <end position="84"/>
    </location>
</feature>
<feature type="domain" description="Tyr recombinase" evidence="2">
    <location>
        <begin position="105"/>
        <end position="286"/>
    </location>
</feature>
<feature type="active site" evidence="1">
    <location>
        <position position="145"/>
    </location>
</feature>
<feature type="active site" evidence="1">
    <location>
        <position position="169"/>
    </location>
</feature>
<feature type="active site" evidence="1">
    <location>
        <position position="238"/>
    </location>
</feature>
<feature type="active site" evidence="1">
    <location>
        <position position="241"/>
    </location>
</feature>
<feature type="active site" evidence="1">
    <location>
        <position position="264"/>
    </location>
</feature>
<feature type="active site" description="O-(3'-phospho-DNA)-tyrosine intermediate" evidence="1">
    <location>
        <position position="273"/>
    </location>
</feature>
<dbReference type="EMBL" id="AP008934">
    <property type="protein sequence ID" value="BAE18661.1"/>
    <property type="molecule type" value="Genomic_DNA"/>
</dbReference>
<dbReference type="RefSeq" id="WP_011303266.1">
    <property type="nucleotide sequence ID" value="NZ_MTGA01000034.1"/>
</dbReference>
<dbReference type="SMR" id="Q49X37"/>
<dbReference type="GeneID" id="3617258"/>
<dbReference type="KEGG" id="ssp:SSP1516"/>
<dbReference type="PATRIC" id="fig|342451.11.peg.1518"/>
<dbReference type="eggNOG" id="COG4974">
    <property type="taxonomic scope" value="Bacteria"/>
</dbReference>
<dbReference type="HOGENOM" id="CLU_027562_9_0_9"/>
<dbReference type="OrthoDB" id="9801717at2"/>
<dbReference type="Proteomes" id="UP000006371">
    <property type="component" value="Chromosome"/>
</dbReference>
<dbReference type="GO" id="GO:0005737">
    <property type="term" value="C:cytoplasm"/>
    <property type="evidence" value="ECO:0007669"/>
    <property type="project" value="UniProtKB-SubCell"/>
</dbReference>
<dbReference type="GO" id="GO:0003677">
    <property type="term" value="F:DNA binding"/>
    <property type="evidence" value="ECO:0007669"/>
    <property type="project" value="UniProtKB-KW"/>
</dbReference>
<dbReference type="GO" id="GO:0009037">
    <property type="term" value="F:tyrosine-based site-specific recombinase activity"/>
    <property type="evidence" value="ECO:0007669"/>
    <property type="project" value="UniProtKB-UniRule"/>
</dbReference>
<dbReference type="GO" id="GO:0051301">
    <property type="term" value="P:cell division"/>
    <property type="evidence" value="ECO:0007669"/>
    <property type="project" value="UniProtKB-KW"/>
</dbReference>
<dbReference type="GO" id="GO:0007059">
    <property type="term" value="P:chromosome segregation"/>
    <property type="evidence" value="ECO:0007669"/>
    <property type="project" value="UniProtKB-UniRule"/>
</dbReference>
<dbReference type="GO" id="GO:0006313">
    <property type="term" value="P:DNA transposition"/>
    <property type="evidence" value="ECO:0007669"/>
    <property type="project" value="UniProtKB-UniRule"/>
</dbReference>
<dbReference type="CDD" id="cd00798">
    <property type="entry name" value="INT_XerDC_C"/>
    <property type="match status" value="1"/>
</dbReference>
<dbReference type="Gene3D" id="1.10.150.130">
    <property type="match status" value="1"/>
</dbReference>
<dbReference type="Gene3D" id="1.10.443.10">
    <property type="entry name" value="Intergrase catalytic core"/>
    <property type="match status" value="1"/>
</dbReference>
<dbReference type="HAMAP" id="MF_01808">
    <property type="entry name" value="Recomb_XerC_XerD"/>
    <property type="match status" value="1"/>
</dbReference>
<dbReference type="InterPro" id="IPR044068">
    <property type="entry name" value="CB"/>
</dbReference>
<dbReference type="InterPro" id="IPR011010">
    <property type="entry name" value="DNA_brk_join_enz"/>
</dbReference>
<dbReference type="InterPro" id="IPR013762">
    <property type="entry name" value="Integrase-like_cat_sf"/>
</dbReference>
<dbReference type="InterPro" id="IPR002104">
    <property type="entry name" value="Integrase_catalytic"/>
</dbReference>
<dbReference type="InterPro" id="IPR010998">
    <property type="entry name" value="Integrase_recombinase_N"/>
</dbReference>
<dbReference type="InterPro" id="IPR004107">
    <property type="entry name" value="Integrase_SAM-like_N"/>
</dbReference>
<dbReference type="InterPro" id="IPR011931">
    <property type="entry name" value="Recomb_XerC"/>
</dbReference>
<dbReference type="InterPro" id="IPR023009">
    <property type="entry name" value="Tyrosine_recombinase_XerC/XerD"/>
</dbReference>
<dbReference type="InterPro" id="IPR050090">
    <property type="entry name" value="Tyrosine_recombinase_XerCD"/>
</dbReference>
<dbReference type="NCBIfam" id="NF001399">
    <property type="entry name" value="PRK00283.1"/>
    <property type="match status" value="1"/>
</dbReference>
<dbReference type="NCBIfam" id="NF040815">
    <property type="entry name" value="recomb_XerA_Arch"/>
    <property type="match status" value="1"/>
</dbReference>
<dbReference type="NCBIfam" id="TIGR02224">
    <property type="entry name" value="recomb_XerC"/>
    <property type="match status" value="1"/>
</dbReference>
<dbReference type="PANTHER" id="PTHR30349">
    <property type="entry name" value="PHAGE INTEGRASE-RELATED"/>
    <property type="match status" value="1"/>
</dbReference>
<dbReference type="PANTHER" id="PTHR30349:SF77">
    <property type="entry name" value="TYROSINE RECOMBINASE XERC"/>
    <property type="match status" value="1"/>
</dbReference>
<dbReference type="Pfam" id="PF02899">
    <property type="entry name" value="Phage_int_SAM_1"/>
    <property type="match status" value="1"/>
</dbReference>
<dbReference type="Pfam" id="PF00589">
    <property type="entry name" value="Phage_integrase"/>
    <property type="match status" value="1"/>
</dbReference>
<dbReference type="SUPFAM" id="SSF56349">
    <property type="entry name" value="DNA breaking-rejoining enzymes"/>
    <property type="match status" value="1"/>
</dbReference>
<dbReference type="PROSITE" id="PS51900">
    <property type="entry name" value="CB"/>
    <property type="match status" value="1"/>
</dbReference>
<dbReference type="PROSITE" id="PS51898">
    <property type="entry name" value="TYR_RECOMBINASE"/>
    <property type="match status" value="1"/>
</dbReference>
<sequence>MEKIQQAYLYMLKVEKQFSEHTLKSYHDDLEQFNVFLAQEHLDLNAFEYKDARNYLSYLYSKNLKRTSVSRKISTLRSFYEYWMTQDEAVVNPFIQLVHPKKEHYLPHFFYEEEMEALFDTVENDAKKGLRDRVILELLYSTGIRVSELVHIKEQDIDMTSPGVKVLGKGGKERFIPFGEFCKQSMERYLASFKPKLNSNHDYLLVNMKGDPITERGVRYVLNDVVKRTAGVTEIHPHKLRHTFATHMLNQGADLRTVQSLLGHVNLSTTGRYTHVTNEQLRKVYLNAHPRAKKEN</sequence>
<protein>
    <recommendedName>
        <fullName evidence="1">Tyrosine recombinase XerC</fullName>
    </recommendedName>
</protein>
<evidence type="ECO:0000255" key="1">
    <source>
        <dbReference type="HAMAP-Rule" id="MF_01808"/>
    </source>
</evidence>
<evidence type="ECO:0000255" key="2">
    <source>
        <dbReference type="PROSITE-ProRule" id="PRU01246"/>
    </source>
</evidence>
<evidence type="ECO:0000255" key="3">
    <source>
        <dbReference type="PROSITE-ProRule" id="PRU01248"/>
    </source>
</evidence>
<name>XERC_STAS1</name>